<keyword id="KW-0067">ATP-binding</keyword>
<keyword id="KW-0173">Coenzyme A biosynthesis</keyword>
<keyword id="KW-0963">Cytoplasm</keyword>
<keyword id="KW-0460">Magnesium</keyword>
<keyword id="KW-0547">Nucleotide-binding</keyword>
<keyword id="KW-0548">Nucleotidyltransferase</keyword>
<keyword id="KW-0808">Transferase</keyword>
<sequence length="161" mass="17898">MGNKIAVIPGTFDPITNGHLDIIERAAKIFDVLYVAVLNNSSKKPLFTVEERMEMIKQVTAHLPNVAVESASGLTVDYAAKRGATAIVRGLRAVSDFEYEMQIASMNRTLNAEIETFFVMTNTKYSFLSSSMVKEVAQYQGDISELVPEMVNRAIQVKFNK</sequence>
<accession>A0AKF8</accession>
<feature type="chain" id="PRO_1000011172" description="Phosphopantetheine adenylyltransferase">
    <location>
        <begin position="1"/>
        <end position="161"/>
    </location>
</feature>
<feature type="binding site" evidence="1">
    <location>
        <begin position="11"/>
        <end position="12"/>
    </location>
    <ligand>
        <name>ATP</name>
        <dbReference type="ChEBI" id="CHEBI:30616"/>
    </ligand>
</feature>
<feature type="binding site" evidence="1">
    <location>
        <position position="11"/>
    </location>
    <ligand>
        <name>substrate</name>
    </ligand>
</feature>
<feature type="binding site" evidence="1">
    <location>
        <position position="19"/>
    </location>
    <ligand>
        <name>ATP</name>
        <dbReference type="ChEBI" id="CHEBI:30616"/>
    </ligand>
</feature>
<feature type="binding site" evidence="1">
    <location>
        <position position="43"/>
    </location>
    <ligand>
        <name>substrate</name>
    </ligand>
</feature>
<feature type="binding site" evidence="1">
    <location>
        <position position="75"/>
    </location>
    <ligand>
        <name>substrate</name>
    </ligand>
</feature>
<feature type="binding site" evidence="1">
    <location>
        <position position="89"/>
    </location>
    <ligand>
        <name>substrate</name>
    </ligand>
</feature>
<feature type="binding site" evidence="1">
    <location>
        <begin position="90"/>
        <end position="92"/>
    </location>
    <ligand>
        <name>ATP</name>
        <dbReference type="ChEBI" id="CHEBI:30616"/>
    </ligand>
</feature>
<feature type="binding site" evidence="1">
    <location>
        <position position="100"/>
    </location>
    <ligand>
        <name>ATP</name>
        <dbReference type="ChEBI" id="CHEBI:30616"/>
    </ligand>
</feature>
<feature type="binding site" evidence="1">
    <location>
        <begin position="125"/>
        <end position="131"/>
    </location>
    <ligand>
        <name>ATP</name>
        <dbReference type="ChEBI" id="CHEBI:30616"/>
    </ligand>
</feature>
<feature type="site" description="Transition state stabilizer" evidence="1">
    <location>
        <position position="19"/>
    </location>
</feature>
<organism>
    <name type="scientific">Listeria welshimeri serovar 6b (strain ATCC 35897 / DSM 20650 / CCUG 15529 / CIP 8149 / NCTC 11857 / SLCC 5334 / V8)</name>
    <dbReference type="NCBI Taxonomy" id="386043"/>
    <lineage>
        <taxon>Bacteria</taxon>
        <taxon>Bacillati</taxon>
        <taxon>Bacillota</taxon>
        <taxon>Bacilli</taxon>
        <taxon>Bacillales</taxon>
        <taxon>Listeriaceae</taxon>
        <taxon>Listeria</taxon>
    </lineage>
</organism>
<reference key="1">
    <citation type="journal article" date="2006" name="J. Bacteriol.">
        <title>Whole-genome sequence of Listeria welshimeri reveals common steps in genome reduction with Listeria innocua as compared to Listeria monocytogenes.</title>
        <authorList>
            <person name="Hain T."/>
            <person name="Steinweg C."/>
            <person name="Kuenne C.T."/>
            <person name="Billion A."/>
            <person name="Ghai R."/>
            <person name="Chatterjee S.S."/>
            <person name="Domann E."/>
            <person name="Kaerst U."/>
            <person name="Goesmann A."/>
            <person name="Bekel T."/>
            <person name="Bartels D."/>
            <person name="Kaiser O."/>
            <person name="Meyer F."/>
            <person name="Puehler A."/>
            <person name="Weisshaar B."/>
            <person name="Wehland J."/>
            <person name="Liang C."/>
            <person name="Dandekar T."/>
            <person name="Lampidis R."/>
            <person name="Kreft J."/>
            <person name="Goebel W."/>
            <person name="Chakraborty T."/>
        </authorList>
    </citation>
    <scope>NUCLEOTIDE SEQUENCE [LARGE SCALE GENOMIC DNA]</scope>
    <source>
        <strain>ATCC 35897 / DSM 20650 / CCUG 15529 / CIP 8149 / NCTC 11857 / SLCC 5334 / V8</strain>
    </source>
</reference>
<evidence type="ECO:0000255" key="1">
    <source>
        <dbReference type="HAMAP-Rule" id="MF_00151"/>
    </source>
</evidence>
<gene>
    <name evidence="1" type="primary">coaD</name>
    <name type="ordered locus">lwe2072</name>
</gene>
<protein>
    <recommendedName>
        <fullName evidence="1">Phosphopantetheine adenylyltransferase</fullName>
        <ecNumber evidence="1">2.7.7.3</ecNumber>
    </recommendedName>
    <alternativeName>
        <fullName evidence="1">Dephospho-CoA pyrophosphorylase</fullName>
    </alternativeName>
    <alternativeName>
        <fullName evidence="1">Pantetheine-phosphate adenylyltransferase</fullName>
        <shortName evidence="1">PPAT</shortName>
    </alternativeName>
</protein>
<name>COAD_LISW6</name>
<comment type="function">
    <text evidence="1">Reversibly transfers an adenylyl group from ATP to 4'-phosphopantetheine, yielding dephospho-CoA (dPCoA) and pyrophosphate.</text>
</comment>
<comment type="catalytic activity">
    <reaction evidence="1">
        <text>(R)-4'-phosphopantetheine + ATP + H(+) = 3'-dephospho-CoA + diphosphate</text>
        <dbReference type="Rhea" id="RHEA:19801"/>
        <dbReference type="ChEBI" id="CHEBI:15378"/>
        <dbReference type="ChEBI" id="CHEBI:30616"/>
        <dbReference type="ChEBI" id="CHEBI:33019"/>
        <dbReference type="ChEBI" id="CHEBI:57328"/>
        <dbReference type="ChEBI" id="CHEBI:61723"/>
        <dbReference type="EC" id="2.7.7.3"/>
    </reaction>
</comment>
<comment type="cofactor">
    <cofactor evidence="1">
        <name>Mg(2+)</name>
        <dbReference type="ChEBI" id="CHEBI:18420"/>
    </cofactor>
</comment>
<comment type="pathway">
    <text evidence="1">Cofactor biosynthesis; coenzyme A biosynthesis; CoA from (R)-pantothenate: step 4/5.</text>
</comment>
<comment type="subunit">
    <text evidence="1">Homohexamer.</text>
</comment>
<comment type="subcellular location">
    <subcellularLocation>
        <location evidence="1">Cytoplasm</location>
    </subcellularLocation>
</comment>
<comment type="similarity">
    <text evidence="1">Belongs to the bacterial CoaD family.</text>
</comment>
<proteinExistence type="inferred from homology"/>
<dbReference type="EC" id="2.7.7.3" evidence="1"/>
<dbReference type="EMBL" id="AM263198">
    <property type="protein sequence ID" value="CAK21490.1"/>
    <property type="molecule type" value="Genomic_DNA"/>
</dbReference>
<dbReference type="RefSeq" id="WP_011702831.1">
    <property type="nucleotide sequence ID" value="NC_008555.1"/>
</dbReference>
<dbReference type="SMR" id="A0AKF8"/>
<dbReference type="STRING" id="386043.lwe2072"/>
<dbReference type="GeneID" id="61189972"/>
<dbReference type="KEGG" id="lwe:lwe2072"/>
<dbReference type="eggNOG" id="COG0669">
    <property type="taxonomic scope" value="Bacteria"/>
</dbReference>
<dbReference type="HOGENOM" id="CLU_100149_0_1_9"/>
<dbReference type="OrthoDB" id="9806661at2"/>
<dbReference type="UniPathway" id="UPA00241">
    <property type="reaction ID" value="UER00355"/>
</dbReference>
<dbReference type="Proteomes" id="UP000000779">
    <property type="component" value="Chromosome"/>
</dbReference>
<dbReference type="GO" id="GO:0005737">
    <property type="term" value="C:cytoplasm"/>
    <property type="evidence" value="ECO:0007669"/>
    <property type="project" value="UniProtKB-SubCell"/>
</dbReference>
<dbReference type="GO" id="GO:0005524">
    <property type="term" value="F:ATP binding"/>
    <property type="evidence" value="ECO:0007669"/>
    <property type="project" value="UniProtKB-KW"/>
</dbReference>
<dbReference type="GO" id="GO:0004595">
    <property type="term" value="F:pantetheine-phosphate adenylyltransferase activity"/>
    <property type="evidence" value="ECO:0007669"/>
    <property type="project" value="UniProtKB-UniRule"/>
</dbReference>
<dbReference type="GO" id="GO:0015937">
    <property type="term" value="P:coenzyme A biosynthetic process"/>
    <property type="evidence" value="ECO:0007669"/>
    <property type="project" value="UniProtKB-UniRule"/>
</dbReference>
<dbReference type="CDD" id="cd02163">
    <property type="entry name" value="PPAT"/>
    <property type="match status" value="1"/>
</dbReference>
<dbReference type="FunFam" id="3.40.50.620:FF:000012">
    <property type="entry name" value="Phosphopantetheine adenylyltransferase"/>
    <property type="match status" value="1"/>
</dbReference>
<dbReference type="Gene3D" id="3.40.50.620">
    <property type="entry name" value="HUPs"/>
    <property type="match status" value="1"/>
</dbReference>
<dbReference type="HAMAP" id="MF_00151">
    <property type="entry name" value="PPAT_bact"/>
    <property type="match status" value="1"/>
</dbReference>
<dbReference type="InterPro" id="IPR004821">
    <property type="entry name" value="Cyt_trans-like"/>
</dbReference>
<dbReference type="InterPro" id="IPR001980">
    <property type="entry name" value="PPAT"/>
</dbReference>
<dbReference type="InterPro" id="IPR014729">
    <property type="entry name" value="Rossmann-like_a/b/a_fold"/>
</dbReference>
<dbReference type="NCBIfam" id="TIGR01510">
    <property type="entry name" value="coaD_prev_kdtB"/>
    <property type="match status" value="1"/>
</dbReference>
<dbReference type="NCBIfam" id="TIGR00125">
    <property type="entry name" value="cyt_tran_rel"/>
    <property type="match status" value="1"/>
</dbReference>
<dbReference type="PANTHER" id="PTHR21342">
    <property type="entry name" value="PHOSPHOPANTETHEINE ADENYLYLTRANSFERASE"/>
    <property type="match status" value="1"/>
</dbReference>
<dbReference type="PANTHER" id="PTHR21342:SF1">
    <property type="entry name" value="PHOSPHOPANTETHEINE ADENYLYLTRANSFERASE"/>
    <property type="match status" value="1"/>
</dbReference>
<dbReference type="Pfam" id="PF01467">
    <property type="entry name" value="CTP_transf_like"/>
    <property type="match status" value="1"/>
</dbReference>
<dbReference type="PRINTS" id="PR01020">
    <property type="entry name" value="LPSBIOSNTHSS"/>
</dbReference>
<dbReference type="SUPFAM" id="SSF52374">
    <property type="entry name" value="Nucleotidylyl transferase"/>
    <property type="match status" value="1"/>
</dbReference>